<dbReference type="EC" id="1.1.1.94" evidence="1"/>
<dbReference type="EMBL" id="CP000088">
    <property type="protein sequence ID" value="AAZ54669.1"/>
    <property type="molecule type" value="Genomic_DNA"/>
</dbReference>
<dbReference type="RefSeq" id="WP_011291078.1">
    <property type="nucleotide sequence ID" value="NC_007333.1"/>
</dbReference>
<dbReference type="SMR" id="Q47S98"/>
<dbReference type="STRING" id="269800.Tfu_0631"/>
<dbReference type="KEGG" id="tfu:Tfu_0631"/>
<dbReference type="eggNOG" id="COG0240">
    <property type="taxonomic scope" value="Bacteria"/>
</dbReference>
<dbReference type="HOGENOM" id="CLU_033449_0_2_11"/>
<dbReference type="OrthoDB" id="9812273at2"/>
<dbReference type="UniPathway" id="UPA00940"/>
<dbReference type="GO" id="GO:0005829">
    <property type="term" value="C:cytosol"/>
    <property type="evidence" value="ECO:0007669"/>
    <property type="project" value="TreeGrafter"/>
</dbReference>
<dbReference type="GO" id="GO:0047952">
    <property type="term" value="F:glycerol-3-phosphate dehydrogenase [NAD(P)+] activity"/>
    <property type="evidence" value="ECO:0007669"/>
    <property type="project" value="UniProtKB-UniRule"/>
</dbReference>
<dbReference type="GO" id="GO:0051287">
    <property type="term" value="F:NAD binding"/>
    <property type="evidence" value="ECO:0007669"/>
    <property type="project" value="InterPro"/>
</dbReference>
<dbReference type="GO" id="GO:0005975">
    <property type="term" value="P:carbohydrate metabolic process"/>
    <property type="evidence" value="ECO:0007669"/>
    <property type="project" value="InterPro"/>
</dbReference>
<dbReference type="GO" id="GO:0046167">
    <property type="term" value="P:glycerol-3-phosphate biosynthetic process"/>
    <property type="evidence" value="ECO:0007669"/>
    <property type="project" value="UniProtKB-UniRule"/>
</dbReference>
<dbReference type="GO" id="GO:0046168">
    <property type="term" value="P:glycerol-3-phosphate catabolic process"/>
    <property type="evidence" value="ECO:0007669"/>
    <property type="project" value="InterPro"/>
</dbReference>
<dbReference type="GO" id="GO:0006650">
    <property type="term" value="P:glycerophospholipid metabolic process"/>
    <property type="evidence" value="ECO:0007669"/>
    <property type="project" value="UniProtKB-UniRule"/>
</dbReference>
<dbReference type="GO" id="GO:0008654">
    <property type="term" value="P:phospholipid biosynthetic process"/>
    <property type="evidence" value="ECO:0007669"/>
    <property type="project" value="UniProtKB-KW"/>
</dbReference>
<dbReference type="FunFam" id="1.10.1040.10:FF:000001">
    <property type="entry name" value="Glycerol-3-phosphate dehydrogenase [NAD(P)+]"/>
    <property type="match status" value="1"/>
</dbReference>
<dbReference type="FunFam" id="3.40.50.720:FF:000019">
    <property type="entry name" value="Glycerol-3-phosphate dehydrogenase [NAD(P)+]"/>
    <property type="match status" value="1"/>
</dbReference>
<dbReference type="Gene3D" id="1.10.1040.10">
    <property type="entry name" value="N-(1-d-carboxylethyl)-l-norvaline Dehydrogenase, domain 2"/>
    <property type="match status" value="1"/>
</dbReference>
<dbReference type="Gene3D" id="3.40.50.720">
    <property type="entry name" value="NAD(P)-binding Rossmann-like Domain"/>
    <property type="match status" value="1"/>
</dbReference>
<dbReference type="HAMAP" id="MF_00394">
    <property type="entry name" value="NAD_Glyc3P_dehydrog"/>
    <property type="match status" value="1"/>
</dbReference>
<dbReference type="InterPro" id="IPR008927">
    <property type="entry name" value="6-PGluconate_DH-like_C_sf"/>
</dbReference>
<dbReference type="InterPro" id="IPR013328">
    <property type="entry name" value="6PGD_dom2"/>
</dbReference>
<dbReference type="InterPro" id="IPR006168">
    <property type="entry name" value="G3P_DH_NAD-dep"/>
</dbReference>
<dbReference type="InterPro" id="IPR006109">
    <property type="entry name" value="G3P_DH_NAD-dep_C"/>
</dbReference>
<dbReference type="InterPro" id="IPR011128">
    <property type="entry name" value="G3P_DH_NAD-dep_N"/>
</dbReference>
<dbReference type="InterPro" id="IPR036291">
    <property type="entry name" value="NAD(P)-bd_dom_sf"/>
</dbReference>
<dbReference type="NCBIfam" id="NF000940">
    <property type="entry name" value="PRK00094.1-2"/>
    <property type="match status" value="1"/>
</dbReference>
<dbReference type="NCBIfam" id="NF000942">
    <property type="entry name" value="PRK00094.1-4"/>
    <property type="match status" value="1"/>
</dbReference>
<dbReference type="PANTHER" id="PTHR11728">
    <property type="entry name" value="GLYCEROL-3-PHOSPHATE DEHYDROGENASE"/>
    <property type="match status" value="1"/>
</dbReference>
<dbReference type="PANTHER" id="PTHR11728:SF1">
    <property type="entry name" value="GLYCEROL-3-PHOSPHATE DEHYDROGENASE [NAD(+)] 2, CHLOROPLASTIC"/>
    <property type="match status" value="1"/>
</dbReference>
<dbReference type="Pfam" id="PF07479">
    <property type="entry name" value="NAD_Gly3P_dh_C"/>
    <property type="match status" value="1"/>
</dbReference>
<dbReference type="Pfam" id="PF01210">
    <property type="entry name" value="NAD_Gly3P_dh_N"/>
    <property type="match status" value="1"/>
</dbReference>
<dbReference type="PIRSF" id="PIRSF000114">
    <property type="entry name" value="Glycerol-3-P_dh"/>
    <property type="match status" value="1"/>
</dbReference>
<dbReference type="PRINTS" id="PR00077">
    <property type="entry name" value="GPDHDRGNASE"/>
</dbReference>
<dbReference type="SUPFAM" id="SSF48179">
    <property type="entry name" value="6-phosphogluconate dehydrogenase C-terminal domain-like"/>
    <property type="match status" value="1"/>
</dbReference>
<dbReference type="SUPFAM" id="SSF51735">
    <property type="entry name" value="NAD(P)-binding Rossmann-fold domains"/>
    <property type="match status" value="1"/>
</dbReference>
<dbReference type="PROSITE" id="PS00957">
    <property type="entry name" value="NAD_G3PDH"/>
    <property type="match status" value="1"/>
</dbReference>
<protein>
    <recommendedName>
        <fullName evidence="1">Glycerol-3-phosphate dehydrogenase [NAD(P)+]</fullName>
        <ecNumber evidence="1">1.1.1.94</ecNumber>
    </recommendedName>
    <alternativeName>
        <fullName evidence="1">NAD(P)(+)-dependent glycerol-3-phosphate dehydrogenase</fullName>
    </alternativeName>
    <alternativeName>
        <fullName evidence="1">NAD(P)H-dependent dihydroxyacetone-phosphate reductase</fullName>
    </alternativeName>
</protein>
<evidence type="ECO:0000255" key="1">
    <source>
        <dbReference type="HAMAP-Rule" id="MF_00394"/>
    </source>
</evidence>
<keyword id="KW-0963">Cytoplasm</keyword>
<keyword id="KW-0444">Lipid biosynthesis</keyword>
<keyword id="KW-0443">Lipid metabolism</keyword>
<keyword id="KW-0520">NAD</keyword>
<keyword id="KW-0521">NADP</keyword>
<keyword id="KW-0547">Nucleotide-binding</keyword>
<keyword id="KW-0560">Oxidoreductase</keyword>
<keyword id="KW-0594">Phospholipid biosynthesis</keyword>
<keyword id="KW-1208">Phospholipid metabolism</keyword>
<organism>
    <name type="scientific">Thermobifida fusca (strain YX)</name>
    <dbReference type="NCBI Taxonomy" id="269800"/>
    <lineage>
        <taxon>Bacteria</taxon>
        <taxon>Bacillati</taxon>
        <taxon>Actinomycetota</taxon>
        <taxon>Actinomycetes</taxon>
        <taxon>Streptosporangiales</taxon>
        <taxon>Nocardiopsidaceae</taxon>
        <taxon>Thermobifida</taxon>
    </lineage>
</organism>
<comment type="function">
    <text evidence="1">Catalyzes the reduction of the glycolytic intermediate dihydroxyacetone phosphate (DHAP) to sn-glycerol 3-phosphate (G3P), the key precursor for phospholipid synthesis.</text>
</comment>
<comment type="catalytic activity">
    <reaction evidence="1">
        <text>sn-glycerol 3-phosphate + NAD(+) = dihydroxyacetone phosphate + NADH + H(+)</text>
        <dbReference type="Rhea" id="RHEA:11092"/>
        <dbReference type="ChEBI" id="CHEBI:15378"/>
        <dbReference type="ChEBI" id="CHEBI:57540"/>
        <dbReference type="ChEBI" id="CHEBI:57597"/>
        <dbReference type="ChEBI" id="CHEBI:57642"/>
        <dbReference type="ChEBI" id="CHEBI:57945"/>
        <dbReference type="EC" id="1.1.1.94"/>
    </reaction>
    <physiologicalReaction direction="right-to-left" evidence="1">
        <dbReference type="Rhea" id="RHEA:11094"/>
    </physiologicalReaction>
</comment>
<comment type="catalytic activity">
    <reaction evidence="1">
        <text>sn-glycerol 3-phosphate + NADP(+) = dihydroxyacetone phosphate + NADPH + H(+)</text>
        <dbReference type="Rhea" id="RHEA:11096"/>
        <dbReference type="ChEBI" id="CHEBI:15378"/>
        <dbReference type="ChEBI" id="CHEBI:57597"/>
        <dbReference type="ChEBI" id="CHEBI:57642"/>
        <dbReference type="ChEBI" id="CHEBI:57783"/>
        <dbReference type="ChEBI" id="CHEBI:58349"/>
        <dbReference type="EC" id="1.1.1.94"/>
    </reaction>
    <physiologicalReaction direction="right-to-left" evidence="1">
        <dbReference type="Rhea" id="RHEA:11098"/>
    </physiologicalReaction>
</comment>
<comment type="pathway">
    <text evidence="1">Membrane lipid metabolism; glycerophospholipid metabolism.</text>
</comment>
<comment type="subcellular location">
    <subcellularLocation>
        <location evidence="1">Cytoplasm</location>
    </subcellularLocation>
</comment>
<comment type="similarity">
    <text evidence="1">Belongs to the NAD-dependent glycerol-3-phosphate dehydrogenase family.</text>
</comment>
<proteinExistence type="inferred from homology"/>
<accession>Q47S98</accession>
<name>GPDA_THEFY</name>
<sequence>MTKVAVLGSGSWGTAFANVVADAGIAETVLWGRRPEIVEAINTKHENPDYLPGITLNPRLTATTDVAEAMAGADFTVIAVPAQTLRTNLAAWSEALDPGTVVVSLMKGIEVGTCLRMSEVIAEVLELPDHRIAVLSGPNLAREIAERQPATAVVACTDEQTAVRLQHLCKSPYFRPYTNTDVIGVELGGAVKNVIALAVGVAVGMGFGDNAKAALITRGLAETVRLAVALGADEHTLAGLAGLGDLVATCSSPLSRNRTFGEKLGSGMTVDEVIAETKQTAEGVKSSTSILELARAHGVEMPITEAVVAMMYHGLPPAEALLAFMSRSAKPERYGV</sequence>
<gene>
    <name evidence="1" type="primary">gpsA</name>
    <name type="ordered locus">Tfu_0631</name>
</gene>
<reference key="1">
    <citation type="journal article" date="2007" name="J. Bacteriol.">
        <title>Genome sequence and analysis of the soil cellulolytic actinomycete Thermobifida fusca YX.</title>
        <authorList>
            <person name="Lykidis A."/>
            <person name="Mavromatis K."/>
            <person name="Ivanova N."/>
            <person name="Anderson I."/>
            <person name="Land M."/>
            <person name="DiBartolo G."/>
            <person name="Martinez M."/>
            <person name="Lapidus A."/>
            <person name="Lucas S."/>
            <person name="Copeland A."/>
            <person name="Richardson P."/>
            <person name="Wilson D.B."/>
            <person name="Kyrpides N."/>
        </authorList>
    </citation>
    <scope>NUCLEOTIDE SEQUENCE [LARGE SCALE GENOMIC DNA]</scope>
    <source>
        <strain>YX</strain>
    </source>
</reference>
<feature type="chain" id="PRO_0000255389" description="Glycerol-3-phosphate dehydrogenase [NAD(P)+]">
    <location>
        <begin position="1"/>
        <end position="336"/>
    </location>
</feature>
<feature type="active site" description="Proton acceptor" evidence="1">
    <location>
        <position position="192"/>
    </location>
</feature>
<feature type="binding site" evidence="1">
    <location>
        <position position="11"/>
    </location>
    <ligand>
        <name>NADPH</name>
        <dbReference type="ChEBI" id="CHEBI:57783"/>
    </ligand>
</feature>
<feature type="binding site" evidence="1">
    <location>
        <position position="12"/>
    </location>
    <ligand>
        <name>NADPH</name>
        <dbReference type="ChEBI" id="CHEBI:57783"/>
    </ligand>
</feature>
<feature type="binding site" evidence="1">
    <location>
        <position position="33"/>
    </location>
    <ligand>
        <name>NADPH</name>
        <dbReference type="ChEBI" id="CHEBI:57783"/>
    </ligand>
</feature>
<feature type="binding site" evidence="1">
    <location>
        <position position="34"/>
    </location>
    <ligand>
        <name>NADPH</name>
        <dbReference type="ChEBI" id="CHEBI:57783"/>
    </ligand>
</feature>
<feature type="binding site" evidence="1">
    <location>
        <position position="107"/>
    </location>
    <ligand>
        <name>NADPH</name>
        <dbReference type="ChEBI" id="CHEBI:57783"/>
    </ligand>
</feature>
<feature type="binding site" evidence="1">
    <location>
        <position position="107"/>
    </location>
    <ligand>
        <name>sn-glycerol 3-phosphate</name>
        <dbReference type="ChEBI" id="CHEBI:57597"/>
    </ligand>
</feature>
<feature type="binding site" evidence="1">
    <location>
        <position position="137"/>
    </location>
    <ligand>
        <name>sn-glycerol 3-phosphate</name>
        <dbReference type="ChEBI" id="CHEBI:57597"/>
    </ligand>
</feature>
<feature type="binding site" evidence="1">
    <location>
        <position position="141"/>
    </location>
    <ligand>
        <name>NADPH</name>
        <dbReference type="ChEBI" id="CHEBI:57783"/>
    </ligand>
</feature>
<feature type="binding site" evidence="1">
    <location>
        <position position="192"/>
    </location>
    <ligand>
        <name>sn-glycerol 3-phosphate</name>
        <dbReference type="ChEBI" id="CHEBI:57597"/>
    </ligand>
</feature>
<feature type="binding site" evidence="1">
    <location>
        <position position="245"/>
    </location>
    <ligand>
        <name>sn-glycerol 3-phosphate</name>
        <dbReference type="ChEBI" id="CHEBI:57597"/>
    </ligand>
</feature>
<feature type="binding site" evidence="1">
    <location>
        <position position="255"/>
    </location>
    <ligand>
        <name>sn-glycerol 3-phosphate</name>
        <dbReference type="ChEBI" id="CHEBI:57597"/>
    </ligand>
</feature>
<feature type="binding site" evidence="1">
    <location>
        <position position="256"/>
    </location>
    <ligand>
        <name>NADPH</name>
        <dbReference type="ChEBI" id="CHEBI:57783"/>
    </ligand>
</feature>
<feature type="binding site" evidence="1">
    <location>
        <position position="256"/>
    </location>
    <ligand>
        <name>sn-glycerol 3-phosphate</name>
        <dbReference type="ChEBI" id="CHEBI:57597"/>
    </ligand>
</feature>
<feature type="binding site" evidence="1">
    <location>
        <position position="257"/>
    </location>
    <ligand>
        <name>sn-glycerol 3-phosphate</name>
        <dbReference type="ChEBI" id="CHEBI:57597"/>
    </ligand>
</feature>
<feature type="binding site" evidence="1">
    <location>
        <position position="282"/>
    </location>
    <ligand>
        <name>NADPH</name>
        <dbReference type="ChEBI" id="CHEBI:57783"/>
    </ligand>
</feature>